<sequence>MTYNKRLFTSESVTEGHPDKIADQVSDAILDEILKDDPNARVACETTVTTGMALISGEISTTTYVDIPKVVRETIKEIGYTRAKFGYDSQTMAVLTAIDEQSPDIAQGVDTALEYRDEASEAEIEATGAGDQGLMFGYATNETDTYMPLPIFLSHQLAKRLSDVRKDEILKYLRPDGKVQVTVEYDEQDKPVRIDTIVLSTQHAEDIELDQIKDDIKTHVIYPTVPESLLDEQTKFYINPTGRFVIGGPQGDAGLTGRKIIVDTYGGYARHGGGCFSGKDPTKVDRSAAYAARYVAKNIVAAQLAEKCEVQLAYAIGVAEPVSISIDTFGTGKVSEYELVEAVRKHFDLRPAGIIKMLDLKHPIYKQTAAYGHFGRTDVLLPWEKLDKVNLLKDSVKA</sequence>
<evidence type="ECO:0000255" key="1">
    <source>
        <dbReference type="HAMAP-Rule" id="MF_00086"/>
    </source>
</evidence>
<protein>
    <recommendedName>
        <fullName evidence="1">S-adenosylmethionine synthase</fullName>
        <shortName evidence="1">AdoMet synthase</shortName>
        <ecNumber evidence="1">2.5.1.6</ecNumber>
    </recommendedName>
    <alternativeName>
        <fullName evidence="1">MAT</fullName>
    </alternativeName>
    <alternativeName>
        <fullName evidence="1">Methionine adenosyltransferase</fullName>
    </alternativeName>
</protein>
<reference key="1">
    <citation type="journal article" date="2005" name="Proc. Natl. Acad. Sci. U.S.A.">
        <title>Whole genome sequence of Staphylococcus saprophyticus reveals the pathogenesis of uncomplicated urinary tract infection.</title>
        <authorList>
            <person name="Kuroda M."/>
            <person name="Yamashita A."/>
            <person name="Hirakawa H."/>
            <person name="Kumano M."/>
            <person name="Morikawa K."/>
            <person name="Higashide M."/>
            <person name="Maruyama A."/>
            <person name="Inose Y."/>
            <person name="Matoba K."/>
            <person name="Toh H."/>
            <person name="Kuhara S."/>
            <person name="Hattori M."/>
            <person name="Ohta T."/>
        </authorList>
    </citation>
    <scope>NUCLEOTIDE SEQUENCE [LARGE SCALE GENOMIC DNA]</scope>
    <source>
        <strain>ATCC 15305 / DSM 20229 / NCIMB 8711 / NCTC 7292 / S-41</strain>
    </source>
</reference>
<dbReference type="EC" id="2.5.1.6" evidence="1"/>
<dbReference type="EMBL" id="AP008934">
    <property type="protein sequence ID" value="BAE18121.1"/>
    <property type="molecule type" value="Genomic_DNA"/>
</dbReference>
<dbReference type="RefSeq" id="WP_011302830.1">
    <property type="nucleotide sequence ID" value="NZ_MTGA01000033.1"/>
</dbReference>
<dbReference type="SMR" id="Q49YL6"/>
<dbReference type="GeneID" id="3615846"/>
<dbReference type="KEGG" id="ssp:SSP0976"/>
<dbReference type="PATRIC" id="fig|342451.11.peg.977"/>
<dbReference type="eggNOG" id="COG0192">
    <property type="taxonomic scope" value="Bacteria"/>
</dbReference>
<dbReference type="HOGENOM" id="CLU_041802_1_1_9"/>
<dbReference type="OrthoDB" id="9801686at2"/>
<dbReference type="UniPathway" id="UPA00315">
    <property type="reaction ID" value="UER00080"/>
</dbReference>
<dbReference type="Proteomes" id="UP000006371">
    <property type="component" value="Chromosome"/>
</dbReference>
<dbReference type="GO" id="GO:0005737">
    <property type="term" value="C:cytoplasm"/>
    <property type="evidence" value="ECO:0007669"/>
    <property type="project" value="UniProtKB-SubCell"/>
</dbReference>
<dbReference type="GO" id="GO:0005524">
    <property type="term" value="F:ATP binding"/>
    <property type="evidence" value="ECO:0007669"/>
    <property type="project" value="UniProtKB-UniRule"/>
</dbReference>
<dbReference type="GO" id="GO:0000287">
    <property type="term" value="F:magnesium ion binding"/>
    <property type="evidence" value="ECO:0007669"/>
    <property type="project" value="UniProtKB-UniRule"/>
</dbReference>
<dbReference type="GO" id="GO:0004478">
    <property type="term" value="F:methionine adenosyltransferase activity"/>
    <property type="evidence" value="ECO:0007669"/>
    <property type="project" value="UniProtKB-UniRule"/>
</dbReference>
<dbReference type="GO" id="GO:0006730">
    <property type="term" value="P:one-carbon metabolic process"/>
    <property type="evidence" value="ECO:0007669"/>
    <property type="project" value="UniProtKB-KW"/>
</dbReference>
<dbReference type="GO" id="GO:0006556">
    <property type="term" value="P:S-adenosylmethionine biosynthetic process"/>
    <property type="evidence" value="ECO:0007669"/>
    <property type="project" value="UniProtKB-UniRule"/>
</dbReference>
<dbReference type="CDD" id="cd18079">
    <property type="entry name" value="S-AdoMet_synt"/>
    <property type="match status" value="1"/>
</dbReference>
<dbReference type="FunFam" id="3.30.300.10:FF:000003">
    <property type="entry name" value="S-adenosylmethionine synthase"/>
    <property type="match status" value="1"/>
</dbReference>
<dbReference type="FunFam" id="3.30.300.10:FF:000004">
    <property type="entry name" value="S-adenosylmethionine synthase"/>
    <property type="match status" value="1"/>
</dbReference>
<dbReference type="Gene3D" id="3.30.300.10">
    <property type="match status" value="3"/>
</dbReference>
<dbReference type="HAMAP" id="MF_00086">
    <property type="entry name" value="S_AdoMet_synth1"/>
    <property type="match status" value="1"/>
</dbReference>
<dbReference type="InterPro" id="IPR022631">
    <property type="entry name" value="ADOMET_SYNTHASE_CS"/>
</dbReference>
<dbReference type="InterPro" id="IPR022630">
    <property type="entry name" value="S-AdoMet_synt_C"/>
</dbReference>
<dbReference type="InterPro" id="IPR022629">
    <property type="entry name" value="S-AdoMet_synt_central"/>
</dbReference>
<dbReference type="InterPro" id="IPR022628">
    <property type="entry name" value="S-AdoMet_synt_N"/>
</dbReference>
<dbReference type="InterPro" id="IPR002133">
    <property type="entry name" value="S-AdoMet_synthetase"/>
</dbReference>
<dbReference type="InterPro" id="IPR022636">
    <property type="entry name" value="S-AdoMet_synthetase_sfam"/>
</dbReference>
<dbReference type="NCBIfam" id="TIGR01034">
    <property type="entry name" value="metK"/>
    <property type="match status" value="1"/>
</dbReference>
<dbReference type="PANTHER" id="PTHR11964">
    <property type="entry name" value="S-ADENOSYLMETHIONINE SYNTHETASE"/>
    <property type="match status" value="1"/>
</dbReference>
<dbReference type="Pfam" id="PF02773">
    <property type="entry name" value="S-AdoMet_synt_C"/>
    <property type="match status" value="1"/>
</dbReference>
<dbReference type="Pfam" id="PF02772">
    <property type="entry name" value="S-AdoMet_synt_M"/>
    <property type="match status" value="1"/>
</dbReference>
<dbReference type="Pfam" id="PF00438">
    <property type="entry name" value="S-AdoMet_synt_N"/>
    <property type="match status" value="1"/>
</dbReference>
<dbReference type="PIRSF" id="PIRSF000497">
    <property type="entry name" value="MAT"/>
    <property type="match status" value="1"/>
</dbReference>
<dbReference type="SUPFAM" id="SSF55973">
    <property type="entry name" value="S-adenosylmethionine synthetase"/>
    <property type="match status" value="3"/>
</dbReference>
<dbReference type="PROSITE" id="PS00376">
    <property type="entry name" value="ADOMET_SYNTHASE_1"/>
    <property type="match status" value="1"/>
</dbReference>
<dbReference type="PROSITE" id="PS00377">
    <property type="entry name" value="ADOMET_SYNTHASE_2"/>
    <property type="match status" value="1"/>
</dbReference>
<feature type="chain" id="PRO_0000241042" description="S-adenosylmethionine synthase">
    <location>
        <begin position="1"/>
        <end position="398"/>
    </location>
</feature>
<feature type="region of interest" description="Flexible loop" evidence="1">
    <location>
        <begin position="101"/>
        <end position="111"/>
    </location>
</feature>
<feature type="binding site" description="in other chain" evidence="1">
    <location>
        <position position="17"/>
    </location>
    <ligand>
        <name>ATP</name>
        <dbReference type="ChEBI" id="CHEBI:30616"/>
        <note>ligand shared between two neighboring subunits</note>
    </ligand>
</feature>
<feature type="binding site" evidence="1">
    <location>
        <position position="19"/>
    </location>
    <ligand>
        <name>Mg(2+)</name>
        <dbReference type="ChEBI" id="CHEBI:18420"/>
    </ligand>
</feature>
<feature type="binding site" evidence="1">
    <location>
        <position position="45"/>
    </location>
    <ligand>
        <name>K(+)</name>
        <dbReference type="ChEBI" id="CHEBI:29103"/>
    </ligand>
</feature>
<feature type="binding site" description="in other chain" evidence="1">
    <location>
        <position position="58"/>
    </location>
    <ligand>
        <name>L-methionine</name>
        <dbReference type="ChEBI" id="CHEBI:57844"/>
        <note>ligand shared between two neighboring subunits</note>
    </ligand>
</feature>
<feature type="binding site" description="in other chain" evidence="1">
    <location>
        <position position="101"/>
    </location>
    <ligand>
        <name>L-methionine</name>
        <dbReference type="ChEBI" id="CHEBI:57844"/>
        <note>ligand shared between two neighboring subunits</note>
    </ligand>
</feature>
<feature type="binding site" description="in other chain" evidence="1">
    <location>
        <begin position="176"/>
        <end position="178"/>
    </location>
    <ligand>
        <name>ATP</name>
        <dbReference type="ChEBI" id="CHEBI:30616"/>
        <note>ligand shared between two neighboring subunits</note>
    </ligand>
</feature>
<feature type="binding site" description="in other chain" evidence="1">
    <location>
        <begin position="243"/>
        <end position="244"/>
    </location>
    <ligand>
        <name>ATP</name>
        <dbReference type="ChEBI" id="CHEBI:30616"/>
        <note>ligand shared between two neighboring subunits</note>
    </ligand>
</feature>
<feature type="binding site" evidence="1">
    <location>
        <position position="252"/>
    </location>
    <ligand>
        <name>ATP</name>
        <dbReference type="ChEBI" id="CHEBI:30616"/>
        <note>ligand shared between two neighboring subunits</note>
    </ligand>
</feature>
<feature type="binding site" evidence="1">
    <location>
        <position position="252"/>
    </location>
    <ligand>
        <name>L-methionine</name>
        <dbReference type="ChEBI" id="CHEBI:57844"/>
        <note>ligand shared between two neighboring subunits</note>
    </ligand>
</feature>
<feature type="binding site" description="in other chain" evidence="1">
    <location>
        <begin position="258"/>
        <end position="259"/>
    </location>
    <ligand>
        <name>ATP</name>
        <dbReference type="ChEBI" id="CHEBI:30616"/>
        <note>ligand shared between two neighboring subunits</note>
    </ligand>
</feature>
<feature type="binding site" evidence="1">
    <location>
        <position position="279"/>
    </location>
    <ligand>
        <name>ATP</name>
        <dbReference type="ChEBI" id="CHEBI:30616"/>
        <note>ligand shared between two neighboring subunits</note>
    </ligand>
</feature>
<feature type="binding site" description="in other chain" evidence="1">
    <location>
        <position position="283"/>
    </location>
    <ligand>
        <name>L-methionine</name>
        <dbReference type="ChEBI" id="CHEBI:57844"/>
        <note>ligand shared between two neighboring subunits</note>
    </ligand>
</feature>
<name>METK_STAS1</name>
<organism>
    <name type="scientific">Staphylococcus saprophyticus subsp. saprophyticus (strain ATCC 15305 / DSM 20229 / NCIMB 8711 / NCTC 7292 / S-41)</name>
    <dbReference type="NCBI Taxonomy" id="342451"/>
    <lineage>
        <taxon>Bacteria</taxon>
        <taxon>Bacillati</taxon>
        <taxon>Bacillota</taxon>
        <taxon>Bacilli</taxon>
        <taxon>Bacillales</taxon>
        <taxon>Staphylococcaceae</taxon>
        <taxon>Staphylococcus</taxon>
    </lineage>
</organism>
<keyword id="KW-0067">ATP-binding</keyword>
<keyword id="KW-0963">Cytoplasm</keyword>
<keyword id="KW-0460">Magnesium</keyword>
<keyword id="KW-0479">Metal-binding</keyword>
<keyword id="KW-0547">Nucleotide-binding</keyword>
<keyword id="KW-0554">One-carbon metabolism</keyword>
<keyword id="KW-0630">Potassium</keyword>
<keyword id="KW-1185">Reference proteome</keyword>
<keyword id="KW-0808">Transferase</keyword>
<accession>Q49YL6</accession>
<proteinExistence type="inferred from homology"/>
<comment type="function">
    <text evidence="1">Catalyzes the formation of S-adenosylmethionine (AdoMet) from methionine and ATP. The overall synthetic reaction is composed of two sequential steps, AdoMet formation and the subsequent tripolyphosphate hydrolysis which occurs prior to release of AdoMet from the enzyme.</text>
</comment>
<comment type="catalytic activity">
    <reaction evidence="1">
        <text>L-methionine + ATP + H2O = S-adenosyl-L-methionine + phosphate + diphosphate</text>
        <dbReference type="Rhea" id="RHEA:21080"/>
        <dbReference type="ChEBI" id="CHEBI:15377"/>
        <dbReference type="ChEBI" id="CHEBI:30616"/>
        <dbReference type="ChEBI" id="CHEBI:33019"/>
        <dbReference type="ChEBI" id="CHEBI:43474"/>
        <dbReference type="ChEBI" id="CHEBI:57844"/>
        <dbReference type="ChEBI" id="CHEBI:59789"/>
        <dbReference type="EC" id="2.5.1.6"/>
    </reaction>
</comment>
<comment type="cofactor">
    <cofactor evidence="1">
        <name>Mg(2+)</name>
        <dbReference type="ChEBI" id="CHEBI:18420"/>
    </cofactor>
    <text evidence="1">Binds 2 divalent ions per subunit.</text>
</comment>
<comment type="cofactor">
    <cofactor evidence="1">
        <name>K(+)</name>
        <dbReference type="ChEBI" id="CHEBI:29103"/>
    </cofactor>
    <text evidence="1">Binds 1 potassium ion per subunit.</text>
</comment>
<comment type="pathway">
    <text evidence="1">Amino-acid biosynthesis; S-adenosyl-L-methionine biosynthesis; S-adenosyl-L-methionine from L-methionine: step 1/1.</text>
</comment>
<comment type="subunit">
    <text evidence="1">Homotetramer; dimer of dimers.</text>
</comment>
<comment type="subcellular location">
    <subcellularLocation>
        <location evidence="1">Cytoplasm</location>
    </subcellularLocation>
</comment>
<comment type="similarity">
    <text evidence="1">Belongs to the AdoMet synthase family.</text>
</comment>
<gene>
    <name evidence="1" type="primary">metK</name>
    <name type="ordered locus">SSP0976</name>
</gene>